<gene>
    <name evidence="1" type="primary">rlmD</name>
    <name type="synonym">rumA</name>
    <name type="ordered locus">KPK_0995</name>
</gene>
<proteinExistence type="inferred from homology"/>
<comment type="function">
    <text evidence="1">Catalyzes the formation of 5-methyl-uridine at position 1939 (m5U1939) in 23S rRNA.</text>
</comment>
<comment type="catalytic activity">
    <reaction evidence="1">
        <text>uridine(1939) in 23S rRNA + S-adenosyl-L-methionine = 5-methyluridine(1939) in 23S rRNA + S-adenosyl-L-homocysteine + H(+)</text>
        <dbReference type="Rhea" id="RHEA:42908"/>
        <dbReference type="Rhea" id="RHEA-COMP:10278"/>
        <dbReference type="Rhea" id="RHEA-COMP:10279"/>
        <dbReference type="ChEBI" id="CHEBI:15378"/>
        <dbReference type="ChEBI" id="CHEBI:57856"/>
        <dbReference type="ChEBI" id="CHEBI:59789"/>
        <dbReference type="ChEBI" id="CHEBI:65315"/>
        <dbReference type="ChEBI" id="CHEBI:74447"/>
        <dbReference type="EC" id="2.1.1.190"/>
    </reaction>
</comment>
<comment type="similarity">
    <text evidence="1">Belongs to the class I-like SAM-binding methyltransferase superfamily. RNA M5U methyltransferase family. RlmD subfamily.</text>
</comment>
<organism>
    <name type="scientific">Klebsiella pneumoniae (strain 342)</name>
    <dbReference type="NCBI Taxonomy" id="507522"/>
    <lineage>
        <taxon>Bacteria</taxon>
        <taxon>Pseudomonadati</taxon>
        <taxon>Pseudomonadota</taxon>
        <taxon>Gammaproteobacteria</taxon>
        <taxon>Enterobacterales</taxon>
        <taxon>Enterobacteriaceae</taxon>
        <taxon>Klebsiella/Raoultella group</taxon>
        <taxon>Klebsiella</taxon>
        <taxon>Klebsiella pneumoniae complex</taxon>
    </lineage>
</organism>
<name>RLMD_KLEP3</name>
<accession>B5XV15</accession>
<reference key="1">
    <citation type="journal article" date="2008" name="PLoS Genet.">
        <title>Complete genome sequence of the N2-fixing broad host range endophyte Klebsiella pneumoniae 342 and virulence predictions verified in mice.</title>
        <authorList>
            <person name="Fouts D.E."/>
            <person name="Tyler H.L."/>
            <person name="DeBoy R.T."/>
            <person name="Daugherty S."/>
            <person name="Ren Q."/>
            <person name="Badger J.H."/>
            <person name="Durkin A.S."/>
            <person name="Huot H."/>
            <person name="Shrivastava S."/>
            <person name="Kothari S."/>
            <person name="Dodson R.J."/>
            <person name="Mohamoud Y."/>
            <person name="Khouri H."/>
            <person name="Roesch L.F.W."/>
            <person name="Krogfelt K.A."/>
            <person name="Struve C."/>
            <person name="Triplett E.W."/>
            <person name="Methe B.A."/>
        </authorList>
    </citation>
    <scope>NUCLEOTIDE SEQUENCE [LARGE SCALE GENOMIC DNA]</scope>
    <source>
        <strain>342</strain>
    </source>
</reference>
<evidence type="ECO:0000255" key="1">
    <source>
        <dbReference type="HAMAP-Rule" id="MF_01010"/>
    </source>
</evidence>
<protein>
    <recommendedName>
        <fullName evidence="1">23S rRNA (uracil(1939)-C(5))-methyltransferase RlmD</fullName>
        <ecNumber evidence="1">2.1.1.190</ecNumber>
    </recommendedName>
    <alternativeName>
        <fullName evidence="1">23S rRNA(m5U1939)-methyltransferase</fullName>
    </alternativeName>
</protein>
<sequence>MAQFYSAKRRVTTRQIITVTVNDLDPFGQGVARHQGKALFVSGVLPQEQAEVVLVEDKKQYARAQVKRRLTDSPQRQAPRCPHFGVCGGCQQQHASVALQQQSKRAALARLMKREVDEVIAGVPWGYRRRARLSLNYQPKTQQLQMGFRQANAKAIVDVVQCPVLAPQLEALLPAVRECLSALSALRHLGHVELVQADNGPLMVLRHTAALPAGDREKLERFSQTHGLSLYLAPQSEILEHIHGEAPWYTSDGLRLVFSPRDFIQVNDGVNQQMVRTALEWLDLQPEDRVLDLFCGMGNFTLPLATRAAHVVGVEGVPALVEKGRENAALNGLSNVTFFHENLEEDVTRQAWAKHGFDKVLLDPARAGAPGVMPHIIKLAPRRVVYVSCNPATLARDSETLLQAGYQIQRLAMLDMFPHTGHLESMVLFERRLT</sequence>
<keyword id="KW-0004">4Fe-4S</keyword>
<keyword id="KW-0408">Iron</keyword>
<keyword id="KW-0411">Iron-sulfur</keyword>
<keyword id="KW-0479">Metal-binding</keyword>
<keyword id="KW-0489">Methyltransferase</keyword>
<keyword id="KW-0698">rRNA processing</keyword>
<keyword id="KW-0949">S-adenosyl-L-methionine</keyword>
<keyword id="KW-0808">Transferase</keyword>
<feature type="chain" id="PRO_1000200844" description="23S rRNA (uracil(1939)-C(5))-methyltransferase RlmD">
    <location>
        <begin position="1"/>
        <end position="434"/>
    </location>
</feature>
<feature type="domain" description="TRAM" evidence="1">
    <location>
        <begin position="10"/>
        <end position="68"/>
    </location>
</feature>
<feature type="active site" description="Nucleophile" evidence="1">
    <location>
        <position position="389"/>
    </location>
</feature>
<feature type="binding site" evidence="1">
    <location>
        <position position="81"/>
    </location>
    <ligand>
        <name>[4Fe-4S] cluster</name>
        <dbReference type="ChEBI" id="CHEBI:49883"/>
    </ligand>
</feature>
<feature type="binding site" evidence="1">
    <location>
        <position position="87"/>
    </location>
    <ligand>
        <name>[4Fe-4S] cluster</name>
        <dbReference type="ChEBI" id="CHEBI:49883"/>
    </ligand>
</feature>
<feature type="binding site" evidence="1">
    <location>
        <position position="90"/>
    </location>
    <ligand>
        <name>[4Fe-4S] cluster</name>
        <dbReference type="ChEBI" id="CHEBI:49883"/>
    </ligand>
</feature>
<feature type="binding site" evidence="1">
    <location>
        <position position="162"/>
    </location>
    <ligand>
        <name>[4Fe-4S] cluster</name>
        <dbReference type="ChEBI" id="CHEBI:49883"/>
    </ligand>
</feature>
<feature type="binding site" evidence="1">
    <location>
        <position position="265"/>
    </location>
    <ligand>
        <name>S-adenosyl-L-methionine</name>
        <dbReference type="ChEBI" id="CHEBI:59789"/>
    </ligand>
</feature>
<feature type="binding site" evidence="1">
    <location>
        <position position="294"/>
    </location>
    <ligand>
        <name>S-adenosyl-L-methionine</name>
        <dbReference type="ChEBI" id="CHEBI:59789"/>
    </ligand>
</feature>
<feature type="binding site" evidence="1">
    <location>
        <position position="299"/>
    </location>
    <ligand>
        <name>S-adenosyl-L-methionine</name>
        <dbReference type="ChEBI" id="CHEBI:59789"/>
    </ligand>
</feature>
<feature type="binding site" evidence="1">
    <location>
        <position position="315"/>
    </location>
    <ligand>
        <name>S-adenosyl-L-methionine</name>
        <dbReference type="ChEBI" id="CHEBI:59789"/>
    </ligand>
</feature>
<feature type="binding site" evidence="1">
    <location>
        <position position="342"/>
    </location>
    <ligand>
        <name>S-adenosyl-L-methionine</name>
        <dbReference type="ChEBI" id="CHEBI:59789"/>
    </ligand>
</feature>
<feature type="binding site" evidence="1">
    <location>
        <position position="363"/>
    </location>
    <ligand>
        <name>S-adenosyl-L-methionine</name>
        <dbReference type="ChEBI" id="CHEBI:59789"/>
    </ligand>
</feature>
<dbReference type="EC" id="2.1.1.190" evidence="1"/>
<dbReference type="EMBL" id="CP000964">
    <property type="protein sequence ID" value="ACI07590.1"/>
    <property type="molecule type" value="Genomic_DNA"/>
</dbReference>
<dbReference type="SMR" id="B5XV15"/>
<dbReference type="KEGG" id="kpe:KPK_0995"/>
<dbReference type="HOGENOM" id="CLU_014689_8_2_6"/>
<dbReference type="Proteomes" id="UP000001734">
    <property type="component" value="Chromosome"/>
</dbReference>
<dbReference type="GO" id="GO:0051539">
    <property type="term" value="F:4 iron, 4 sulfur cluster binding"/>
    <property type="evidence" value="ECO:0007669"/>
    <property type="project" value="UniProtKB-KW"/>
</dbReference>
<dbReference type="GO" id="GO:0005506">
    <property type="term" value="F:iron ion binding"/>
    <property type="evidence" value="ECO:0007669"/>
    <property type="project" value="UniProtKB-UniRule"/>
</dbReference>
<dbReference type="GO" id="GO:0003723">
    <property type="term" value="F:RNA binding"/>
    <property type="evidence" value="ECO:0007669"/>
    <property type="project" value="InterPro"/>
</dbReference>
<dbReference type="GO" id="GO:0070041">
    <property type="term" value="F:rRNA (uridine-C5-)-methyltransferase activity"/>
    <property type="evidence" value="ECO:0007669"/>
    <property type="project" value="UniProtKB-UniRule"/>
</dbReference>
<dbReference type="GO" id="GO:0070475">
    <property type="term" value="P:rRNA base methylation"/>
    <property type="evidence" value="ECO:0007669"/>
    <property type="project" value="TreeGrafter"/>
</dbReference>
<dbReference type="CDD" id="cd02440">
    <property type="entry name" value="AdoMet_MTases"/>
    <property type="match status" value="1"/>
</dbReference>
<dbReference type="FunFam" id="3.40.50.150:FF:000009">
    <property type="entry name" value="23S rRNA (Uracil(1939)-C(5))-methyltransferase RlmD"/>
    <property type="match status" value="1"/>
</dbReference>
<dbReference type="FunFam" id="2.40.50.1070:FF:000004">
    <property type="entry name" value="23S rRNA (uracil(1939)-C(5))-methyltransferase RlmD"/>
    <property type="match status" value="1"/>
</dbReference>
<dbReference type="FunFam" id="2.40.50.140:FF:000097">
    <property type="entry name" value="23S rRNA (uracil(1939)-C(5))-methyltransferase RlmD"/>
    <property type="match status" value="1"/>
</dbReference>
<dbReference type="Gene3D" id="2.40.50.1070">
    <property type="match status" value="1"/>
</dbReference>
<dbReference type="Gene3D" id="2.40.50.140">
    <property type="entry name" value="Nucleic acid-binding proteins"/>
    <property type="match status" value="1"/>
</dbReference>
<dbReference type="Gene3D" id="3.40.50.150">
    <property type="entry name" value="Vaccinia Virus protein VP39"/>
    <property type="match status" value="1"/>
</dbReference>
<dbReference type="HAMAP" id="MF_01010">
    <property type="entry name" value="23SrRNA_methyltr_RlmD"/>
    <property type="match status" value="1"/>
</dbReference>
<dbReference type="InterPro" id="IPR001566">
    <property type="entry name" value="23S_rRNA_MeTrfase_RlmD"/>
</dbReference>
<dbReference type="InterPro" id="IPR030390">
    <property type="entry name" value="MeTrfase_TrmA_AS"/>
</dbReference>
<dbReference type="InterPro" id="IPR030391">
    <property type="entry name" value="MeTrfase_TrmA_CS"/>
</dbReference>
<dbReference type="InterPro" id="IPR012340">
    <property type="entry name" value="NA-bd_OB-fold"/>
</dbReference>
<dbReference type="InterPro" id="IPR029063">
    <property type="entry name" value="SAM-dependent_MTases_sf"/>
</dbReference>
<dbReference type="InterPro" id="IPR002792">
    <property type="entry name" value="TRAM_dom"/>
</dbReference>
<dbReference type="InterPro" id="IPR010280">
    <property type="entry name" value="U5_MeTrfase_fam"/>
</dbReference>
<dbReference type="NCBIfam" id="NF009639">
    <property type="entry name" value="PRK13168.1"/>
    <property type="match status" value="1"/>
</dbReference>
<dbReference type="NCBIfam" id="TIGR00479">
    <property type="entry name" value="rumA"/>
    <property type="match status" value="1"/>
</dbReference>
<dbReference type="PANTHER" id="PTHR11061:SF49">
    <property type="entry name" value="23S RRNA (URACIL(1939)-C(5))-METHYLTRANSFERASE RLMD"/>
    <property type="match status" value="1"/>
</dbReference>
<dbReference type="PANTHER" id="PTHR11061">
    <property type="entry name" value="RNA M5U METHYLTRANSFERASE"/>
    <property type="match status" value="1"/>
</dbReference>
<dbReference type="Pfam" id="PF01938">
    <property type="entry name" value="TRAM"/>
    <property type="match status" value="1"/>
</dbReference>
<dbReference type="Pfam" id="PF05958">
    <property type="entry name" value="tRNA_U5-meth_tr"/>
    <property type="match status" value="1"/>
</dbReference>
<dbReference type="SUPFAM" id="SSF50249">
    <property type="entry name" value="Nucleic acid-binding proteins"/>
    <property type="match status" value="1"/>
</dbReference>
<dbReference type="SUPFAM" id="SSF53335">
    <property type="entry name" value="S-adenosyl-L-methionine-dependent methyltransferases"/>
    <property type="match status" value="1"/>
</dbReference>
<dbReference type="PROSITE" id="PS51687">
    <property type="entry name" value="SAM_MT_RNA_M5U"/>
    <property type="match status" value="1"/>
</dbReference>
<dbReference type="PROSITE" id="PS50926">
    <property type="entry name" value="TRAM"/>
    <property type="match status" value="1"/>
</dbReference>
<dbReference type="PROSITE" id="PS01230">
    <property type="entry name" value="TRMA_1"/>
    <property type="match status" value="1"/>
</dbReference>
<dbReference type="PROSITE" id="PS01231">
    <property type="entry name" value="TRMA_2"/>
    <property type="match status" value="1"/>
</dbReference>